<sequence length="98" mass="11194">MATQVPPSTTPTPFANRPAPPTKDLEIPEDYKKTFRGRGTVSKFVDPCEAARKASLDCLERTQYNRSECTDFFTAYKECKGNWLAQRKEDRMKGRDTV</sequence>
<feature type="transit peptide" description="Mitochondrion" evidence="3">
    <location>
        <begin position="1"/>
        <end position="18"/>
    </location>
</feature>
<feature type="chain" id="PRO_0000410038" description="Cytochrome c oxidase-assembly factor COX23, mitochondrial">
    <location>
        <begin position="19"/>
        <end position="98"/>
    </location>
</feature>
<feature type="domain" description="CHCH" evidence="4">
    <location>
        <begin position="45"/>
        <end position="87"/>
    </location>
</feature>
<feature type="region of interest" description="Disordered" evidence="5">
    <location>
        <begin position="1"/>
        <end position="27"/>
    </location>
</feature>
<feature type="short sequence motif" description="Cx9C motif 1" evidence="4">
    <location>
        <begin position="48"/>
        <end position="58"/>
    </location>
</feature>
<feature type="short sequence motif" description="Cx9C motif 2" evidence="4">
    <location>
        <begin position="69"/>
        <end position="79"/>
    </location>
</feature>
<feature type="compositionally biased region" description="Polar residues" evidence="5">
    <location>
        <begin position="1"/>
        <end position="13"/>
    </location>
</feature>
<feature type="disulfide bond" evidence="4">
    <location>
        <begin position="48"/>
        <end position="79"/>
    </location>
</feature>
<feature type="disulfide bond" evidence="4">
    <location>
        <begin position="58"/>
        <end position="69"/>
    </location>
</feature>
<dbReference type="EMBL" id="AAEY01000066">
    <property type="protein sequence ID" value="EAL17308.1"/>
    <property type="molecule type" value="Genomic_DNA"/>
</dbReference>
<dbReference type="RefSeq" id="XP_771955.1">
    <property type="nucleotide sequence ID" value="XM_766862.1"/>
</dbReference>
<dbReference type="SMR" id="P0CM71"/>
<dbReference type="EnsemblFungi" id="AAW47084">
    <property type="protein sequence ID" value="AAW47084"/>
    <property type="gene ID" value="CNN01390"/>
</dbReference>
<dbReference type="GeneID" id="4939746"/>
<dbReference type="KEGG" id="cnb:CNBN1350"/>
<dbReference type="VEuPathDB" id="FungiDB:CNBN1350"/>
<dbReference type="HOGENOM" id="CLU_157422_2_0_1"/>
<dbReference type="OrthoDB" id="571at5206"/>
<dbReference type="GO" id="GO:0005758">
    <property type="term" value="C:mitochondrial intermembrane space"/>
    <property type="evidence" value="ECO:0007669"/>
    <property type="project" value="UniProtKB-SubCell"/>
</dbReference>
<dbReference type="GO" id="GO:0033108">
    <property type="term" value="P:mitochondrial respiratory chain complex assembly"/>
    <property type="evidence" value="ECO:0007669"/>
    <property type="project" value="TreeGrafter"/>
</dbReference>
<dbReference type="Gene3D" id="1.10.287.1130">
    <property type="entry name" value="CytochromE C oxidase copper chaperone"/>
    <property type="match status" value="1"/>
</dbReference>
<dbReference type="InterPro" id="IPR051040">
    <property type="entry name" value="COX23"/>
</dbReference>
<dbReference type="InterPro" id="IPR009069">
    <property type="entry name" value="Cys_alpha_HP_mot_SF"/>
</dbReference>
<dbReference type="PANTHER" id="PTHR46811">
    <property type="entry name" value="COILED-COIL-HELIX-COILED-COIL-HELIX DOMAIN-CONTAINING PROTEIN 7"/>
    <property type="match status" value="1"/>
</dbReference>
<dbReference type="PANTHER" id="PTHR46811:SF1">
    <property type="entry name" value="COILED-COIL-HELIX-COILED-COIL-HELIX DOMAIN-CONTAINING PROTEIN 7"/>
    <property type="match status" value="1"/>
</dbReference>
<dbReference type="SUPFAM" id="SSF47072">
    <property type="entry name" value="Cysteine alpha-hairpin motif"/>
    <property type="match status" value="1"/>
</dbReference>
<dbReference type="PROSITE" id="PS51808">
    <property type="entry name" value="CHCH"/>
    <property type="match status" value="1"/>
</dbReference>
<name>COX23_CRYNB</name>
<comment type="function">
    <text evidence="2">Required for the assembly of cytochrome c oxidase.</text>
</comment>
<comment type="subcellular location">
    <subcellularLocation>
        <location evidence="1">Mitochondrion intermembrane space</location>
    </subcellularLocation>
</comment>
<comment type="similarity">
    <text evidence="6">Belongs to the COX23 family.</text>
</comment>
<keyword id="KW-1015">Disulfide bond</keyword>
<keyword id="KW-0496">Mitochondrion</keyword>
<keyword id="KW-0809">Transit peptide</keyword>
<reference key="1">
    <citation type="journal article" date="2005" name="Science">
        <title>The genome of the basidiomycetous yeast and human pathogen Cryptococcus neoformans.</title>
        <authorList>
            <person name="Loftus B.J."/>
            <person name="Fung E."/>
            <person name="Roncaglia P."/>
            <person name="Rowley D."/>
            <person name="Amedeo P."/>
            <person name="Bruno D."/>
            <person name="Vamathevan J."/>
            <person name="Miranda M."/>
            <person name="Anderson I.J."/>
            <person name="Fraser J.A."/>
            <person name="Allen J.E."/>
            <person name="Bosdet I.E."/>
            <person name="Brent M.R."/>
            <person name="Chiu R."/>
            <person name="Doering T.L."/>
            <person name="Donlin M.J."/>
            <person name="D'Souza C.A."/>
            <person name="Fox D.S."/>
            <person name="Grinberg V."/>
            <person name="Fu J."/>
            <person name="Fukushima M."/>
            <person name="Haas B.J."/>
            <person name="Huang J.C."/>
            <person name="Janbon G."/>
            <person name="Jones S.J.M."/>
            <person name="Koo H.L."/>
            <person name="Krzywinski M.I."/>
            <person name="Kwon-Chung K.J."/>
            <person name="Lengeler K.B."/>
            <person name="Maiti R."/>
            <person name="Marra M.A."/>
            <person name="Marra R.E."/>
            <person name="Mathewson C.A."/>
            <person name="Mitchell T.G."/>
            <person name="Pertea M."/>
            <person name="Riggs F.R."/>
            <person name="Salzberg S.L."/>
            <person name="Schein J.E."/>
            <person name="Shvartsbeyn A."/>
            <person name="Shin H."/>
            <person name="Shumway M."/>
            <person name="Specht C.A."/>
            <person name="Suh B.B."/>
            <person name="Tenney A."/>
            <person name="Utterback T.R."/>
            <person name="Wickes B.L."/>
            <person name="Wortman J.R."/>
            <person name="Wye N.H."/>
            <person name="Kronstad J.W."/>
            <person name="Lodge J.K."/>
            <person name="Heitman J."/>
            <person name="Davis R.W."/>
            <person name="Fraser C.M."/>
            <person name="Hyman R.W."/>
        </authorList>
    </citation>
    <scope>NUCLEOTIDE SEQUENCE [LARGE SCALE GENOMIC DNA]</scope>
    <source>
        <strain>B-3501A</strain>
    </source>
</reference>
<evidence type="ECO:0000250" key="1"/>
<evidence type="ECO:0000250" key="2">
    <source>
        <dbReference type="UniProtKB" id="P38824"/>
    </source>
</evidence>
<evidence type="ECO:0000255" key="3"/>
<evidence type="ECO:0000255" key="4">
    <source>
        <dbReference type="PROSITE-ProRule" id="PRU01150"/>
    </source>
</evidence>
<evidence type="ECO:0000256" key="5">
    <source>
        <dbReference type="SAM" id="MobiDB-lite"/>
    </source>
</evidence>
<evidence type="ECO:0000305" key="6"/>
<accession>P0CM71</accession>
<accession>Q55HI5</accession>
<accession>Q5K723</accession>
<organism>
    <name type="scientific">Cryptococcus neoformans var. neoformans serotype D (strain B-3501A)</name>
    <name type="common">Filobasidiella neoformans</name>
    <dbReference type="NCBI Taxonomy" id="283643"/>
    <lineage>
        <taxon>Eukaryota</taxon>
        <taxon>Fungi</taxon>
        <taxon>Dikarya</taxon>
        <taxon>Basidiomycota</taxon>
        <taxon>Agaricomycotina</taxon>
        <taxon>Tremellomycetes</taxon>
        <taxon>Tremellales</taxon>
        <taxon>Cryptococcaceae</taxon>
        <taxon>Cryptococcus</taxon>
        <taxon>Cryptococcus neoformans species complex</taxon>
    </lineage>
</organism>
<protein>
    <recommendedName>
        <fullName>Cytochrome c oxidase-assembly factor COX23, mitochondrial</fullName>
    </recommendedName>
</protein>
<gene>
    <name type="primary">COX23</name>
    <name type="ordered locus">CNBN1350</name>
</gene>
<proteinExistence type="inferred from homology"/>